<evidence type="ECO:0000255" key="1"/>
<evidence type="ECO:0000256" key="2">
    <source>
        <dbReference type="SAM" id="MobiDB-lite"/>
    </source>
</evidence>
<evidence type="ECO:0000269" key="3">
    <source>
    </source>
</evidence>
<evidence type="ECO:0000303" key="4">
    <source>
    </source>
</evidence>
<evidence type="ECO:0000303" key="5">
    <source>
    </source>
</evidence>
<evidence type="ECO:0000312" key="6">
    <source>
        <dbReference type="EMBL" id="AXQ62688.1"/>
    </source>
</evidence>
<evidence type="ECO:0007829" key="7">
    <source>
        <dbReference type="PDB" id="7QOG"/>
    </source>
</evidence>
<organism>
    <name type="scientific">Bacteroides phage crAss001</name>
    <name type="common">Bacteroides phage PhiCrAss001</name>
    <dbReference type="NCBI Taxonomy" id="2301731"/>
    <lineage>
        <taxon>Viruses</taxon>
        <taxon>Duplodnaviria</taxon>
        <taxon>Heunggongvirae</taxon>
        <taxon>Uroviricota</taxon>
        <taxon>Caudoviricetes</taxon>
        <taxon>Crassvirales</taxon>
        <taxon>Steigviridae</taxon>
        <taxon>Asinivirinae</taxon>
        <taxon>Kehishuvirus</taxon>
        <taxon>Kehishuvirus primarius</taxon>
    </lineage>
</organism>
<keyword id="KW-0002">3D-structure</keyword>
<keyword id="KW-1043">Host membrane</keyword>
<keyword id="KW-0472">Membrane</keyword>
<keyword id="KW-1185">Reference proteome</keyword>
<keyword id="KW-0812">Transmembrane</keyword>
<keyword id="KW-1133">Transmembrane helix</keyword>
<keyword id="KW-1171">Viral genome ejection through host cell envelope</keyword>
<keyword id="KW-1162">Viral penetration into host cytoplasm</keyword>
<keyword id="KW-0946">Virion</keyword>
<keyword id="KW-1160">Virus entry into host cell</keyword>
<organismHost>
    <name type="scientific">Bacteroides intestinalis</name>
    <dbReference type="NCBI Taxonomy" id="329854"/>
</organismHost>
<protein>
    <recommendedName>
        <fullName evidence="5">Cargo protein 1</fullName>
        <shortName evidence="5">C1</shortName>
    </recommendedName>
    <alternativeName>
        <fullName evidence="4">Gene product 45</fullName>
        <shortName evidence="4">gp45</shortName>
    </alternativeName>
</protein>
<comment type="function">
    <text evidence="3">Protein that is stored in high quantity in the viral capsid and may play a role during ejection.</text>
</comment>
<comment type="subunit">
    <text evidence="3">Homododecamer (PubMed:37138077). Interacts with the portal protein (PubMed:37138077).</text>
</comment>
<comment type="subcellular location">
    <subcellularLocation>
        <location>Virion</location>
    </subcellularLocation>
    <subcellularLocation>
        <location evidence="1">Host membrane</location>
        <topology evidence="1">Single-pass membrane protein</topology>
    </subcellularLocation>
    <text evidence="3">Present in 12 copies in the virion (PubMed:37138077). Localizes inside both the tail and the capsid (PubMed:37138077).</text>
</comment>
<reference key="1">
    <citation type="journal article" date="2018" name="Nat. Commun.">
        <title>PhiCrAss001 represents the most abundant bacteriophage family in the human gut and infects Bacteroides intestinalis.</title>
        <authorList>
            <person name="Shkoporov A.N."/>
            <person name="Khokhlova E.V."/>
            <person name="Fitzgerald C.B."/>
            <person name="Stockdale S.R."/>
            <person name="Draper L.A."/>
            <person name="Ross R.P."/>
            <person name="Hill C."/>
        </authorList>
    </citation>
    <scope>NUCLEOTIDE SEQUENCE [LARGE SCALE GENOMIC DNA]</scope>
</reference>
<reference key="2">
    <citation type="journal article" date="2023" name="Nature">
        <title>Structural atlas of a human gut crassvirus.</title>
        <authorList>
            <person name="Bayfield O.W."/>
            <person name="Shkoporov A.N."/>
            <person name="Yutin N."/>
            <person name="Khokhlova E.V."/>
            <person name="Smith J.L.R."/>
            <person name="Hawkins D.E.D.P."/>
            <person name="Koonin E.V."/>
            <person name="Hill C."/>
            <person name="Antson A.A."/>
        </authorList>
    </citation>
    <scope>SUBCELLULAR LOCATION</scope>
    <scope>FUNCTION</scope>
    <scope>INTERACTION WITH THE PORTAL PROTEIN</scope>
    <scope>SUBUNIT</scope>
</reference>
<feature type="chain" id="PRO_0000458037" description="Cargo protein 1">
    <location>
        <begin position="1"/>
        <end position="842"/>
    </location>
</feature>
<feature type="transmembrane region" description="Helical" evidence="1">
    <location>
        <begin position="140"/>
        <end position="160"/>
    </location>
</feature>
<feature type="region of interest" description="Disordered" evidence="2">
    <location>
        <begin position="1"/>
        <end position="29"/>
    </location>
</feature>
<feature type="region of interest" description="Interaction with the portal protein" evidence="3">
    <location>
        <begin position="425"/>
        <end position="552"/>
    </location>
</feature>
<feature type="region of interest" description="Disordered" evidence="2">
    <location>
        <begin position="817"/>
        <end position="842"/>
    </location>
</feature>
<feature type="compositionally biased region" description="Basic residues" evidence="2">
    <location>
        <begin position="1"/>
        <end position="11"/>
    </location>
</feature>
<feature type="compositionally biased region" description="Low complexity" evidence="2">
    <location>
        <begin position="20"/>
        <end position="29"/>
    </location>
</feature>
<feature type="compositionally biased region" description="Basic residues" evidence="2">
    <location>
        <begin position="824"/>
        <end position="842"/>
    </location>
</feature>
<feature type="helix" evidence="7">
    <location>
        <begin position="220"/>
        <end position="235"/>
    </location>
</feature>
<feature type="strand" evidence="7">
    <location>
        <begin position="427"/>
        <end position="430"/>
    </location>
</feature>
<feature type="strand" evidence="7">
    <location>
        <begin position="440"/>
        <end position="443"/>
    </location>
</feature>
<feature type="turn" evidence="7">
    <location>
        <begin position="450"/>
        <end position="452"/>
    </location>
</feature>
<feature type="strand" evidence="7">
    <location>
        <begin position="456"/>
        <end position="459"/>
    </location>
</feature>
<feature type="strand" evidence="7">
    <location>
        <begin position="476"/>
        <end position="478"/>
    </location>
</feature>
<feature type="strand" evidence="7">
    <location>
        <begin position="481"/>
        <end position="483"/>
    </location>
</feature>
<feature type="strand" evidence="7">
    <location>
        <begin position="485"/>
        <end position="488"/>
    </location>
</feature>
<feature type="helix" evidence="7">
    <location>
        <begin position="492"/>
        <end position="495"/>
    </location>
</feature>
<feature type="helix" evidence="7">
    <location>
        <begin position="496"/>
        <end position="498"/>
    </location>
</feature>
<feature type="strand" evidence="7">
    <location>
        <begin position="501"/>
        <end position="504"/>
    </location>
</feature>
<feature type="helix" evidence="7">
    <location>
        <begin position="505"/>
        <end position="511"/>
    </location>
</feature>
<feature type="turn" evidence="7">
    <location>
        <begin position="513"/>
        <end position="517"/>
    </location>
</feature>
<feature type="helix" evidence="7">
    <location>
        <begin position="522"/>
        <end position="551"/>
    </location>
</feature>
<accession>A0A385DV85</accession>
<sequence length="842" mass="90803">MAKKKIKRRGKMPPNIFDTGGQSWGQQSSGQFSNAFKGENLGNSIGSIGGAVGGIAQAGISNAQIADTSGIEAQNKAQKNMVVGASSNDDLMSEWGSWNKVKDDYSWKDVRGGSTGQRVTNTIGAAGQGAAAGASVGGPIGAIVGGVVGLGSAIGGWLGGNRKAKRKAKKLNKEAKEANERALTSFETRADNIDTQNDFNMLANFSAYGGPLEFGSGAIGYEFDNRYLNNQEMSAVAKQRLTSLPNSFQALPEMNTYNAFAEGGGLSREKNYGSKKKPYPSVPSGDFAGPHRSYPIPTKADARDALRLAGLHGNESVRRKVLAKYPSLKAFGGSLFDSVVGNNFNQSFTQGIQGMFQQEPEQTVQAANIAKDGGDIKIKEKNKGKFTAYCGGKVTEACIRKGKNSSNPTTRKRATFAQNARNWNAFGGWLNTQGGDFTNGVTFINEGGSHEENPYQGIQIGVDPEGAPNLVEQGEVVYDDYVFSDRMEIPDDIRKEYKLRGKTFAKAAKSAQRESEERPNDPLSTKGLQAAMERIATAQEEARQRKEAHREGNEYPSMFAYGGDTNPYGLALEDPMSVEELEALMVQSGETGEIAPEGNNGNRQTWTRYAPIIGSGLASLSDLFSKPDYDSADLISGVDLGAEAVGYAPIGNYLSYRPLDRDFYINKMNQQAAATRRGLMNTSGGNRLNAQAGILAADYNYGQNMGNLARQAEEYNQQLRERVEAFNRGTNMFNTETGLKASMFNAESRNAAKRARLGQATTVAQLRQGIKDQDAARRSANITNFLQGLGDMGWENEQANWLDTLAKSGVLKMNTKGEYTGGTKKAKGGKVRTKKKKGLTYG</sequence>
<name>CARG1_BPCA1</name>
<dbReference type="EMBL" id="MH675552">
    <property type="protein sequence ID" value="AXQ62688.1"/>
    <property type="molecule type" value="Genomic_DNA"/>
</dbReference>
<dbReference type="PDB" id="7QOG">
    <property type="method" value="EM"/>
    <property type="resolution" value="3.09 A"/>
    <property type="chains" value="M/N=1-842"/>
</dbReference>
<dbReference type="PDB" id="7QOI">
    <property type="method" value="EM"/>
    <property type="resolution" value="3.62 A"/>
    <property type="chains" value="GK/GL/GM/GN/GO/GP/GQ/GR/GS/GT/GU/GV/IK/IL/IM/IN/IO/IP/IQ/IR/IS/IT/IU/IV=1-842"/>
</dbReference>
<dbReference type="PDB" id="7QOJ">
    <property type="method" value="EM"/>
    <property type="resolution" value="3.21 A"/>
    <property type="chains" value="M/N=1-842"/>
</dbReference>
<dbReference type="PDB" id="7QOL">
    <property type="method" value="EM"/>
    <property type="resolution" value="3.33 A"/>
    <property type="chains" value="M/N/e/f=1-842"/>
</dbReference>
<dbReference type="PDB" id="8CKB">
    <property type="method" value="EM"/>
    <property type="resolution" value="4.39 A"/>
    <property type="chains" value="G001/G002/G003/G004/G005/G006/G007/G008/G009/G010/G011/G012/G013/G014/G015/G016/G017/G018/G019/G020/G021/G022/G023/G024=1-842"/>
</dbReference>
<dbReference type="PDBsum" id="7QOG"/>
<dbReference type="PDBsum" id="7QOI"/>
<dbReference type="PDBsum" id="7QOJ"/>
<dbReference type="PDBsum" id="7QOL"/>
<dbReference type="PDBsum" id="8CKB"/>
<dbReference type="EMDB" id="EMD-14089"/>
<dbReference type="EMDB" id="EMD-14091"/>
<dbReference type="EMDB" id="EMD-14092"/>
<dbReference type="EMDB" id="EMD-14094"/>
<dbReference type="SMR" id="A0A385DV85"/>
<dbReference type="Proteomes" id="UP000262320">
    <property type="component" value="Genome"/>
</dbReference>
<dbReference type="GO" id="GO:0033644">
    <property type="term" value="C:host cell membrane"/>
    <property type="evidence" value="ECO:0007669"/>
    <property type="project" value="UniProtKB-SubCell"/>
</dbReference>
<dbReference type="GO" id="GO:0016020">
    <property type="term" value="C:membrane"/>
    <property type="evidence" value="ECO:0007669"/>
    <property type="project" value="UniProtKB-KW"/>
</dbReference>
<dbReference type="GO" id="GO:0044423">
    <property type="term" value="C:virion component"/>
    <property type="evidence" value="ECO:0007669"/>
    <property type="project" value="UniProtKB-KW"/>
</dbReference>
<dbReference type="GO" id="GO:0046718">
    <property type="term" value="P:symbiont entry into host cell"/>
    <property type="evidence" value="ECO:0007669"/>
    <property type="project" value="UniProtKB-KW"/>
</dbReference>
<proteinExistence type="evidence at protein level"/>
<gene>
    <name evidence="6" type="ORF">crAss001_45</name>
</gene>